<evidence type="ECO:0000250" key="1">
    <source>
        <dbReference type="UniProtKB" id="Q8BI22"/>
    </source>
</evidence>
<evidence type="ECO:0000255" key="2"/>
<evidence type="ECO:0000256" key="3">
    <source>
        <dbReference type="SAM" id="MobiDB-lite"/>
    </source>
</evidence>
<evidence type="ECO:0000269" key="4">
    <source>
    </source>
</evidence>
<evidence type="ECO:0000269" key="5">
    <source>
    </source>
</evidence>
<evidence type="ECO:0000303" key="6">
    <source>
    </source>
</evidence>
<evidence type="ECO:0000303" key="7">
    <source>
    </source>
</evidence>
<evidence type="ECO:0000305" key="8"/>
<evidence type="ECO:0007744" key="9">
    <source>
    </source>
</evidence>
<evidence type="ECO:0007744" key="10">
    <source>
    </source>
</evidence>
<keyword id="KW-0025">Alternative splicing</keyword>
<keyword id="KW-0175">Coiled coil</keyword>
<keyword id="KW-0963">Cytoplasm</keyword>
<keyword id="KW-0206">Cytoskeleton</keyword>
<keyword id="KW-0597">Phosphoprotein</keyword>
<keyword id="KW-1267">Proteomics identification</keyword>
<keyword id="KW-1185">Reference proteome</keyword>
<name>CE128_HUMAN</name>
<protein>
    <recommendedName>
        <fullName>Centrosomal protein of 128 kDa</fullName>
        <shortName>Cep128</shortName>
    </recommendedName>
</protein>
<proteinExistence type="evidence at protein level"/>
<feature type="chain" id="PRO_0000089946" description="Centrosomal protein of 128 kDa">
    <location>
        <begin position="1"/>
        <end position="1094"/>
    </location>
</feature>
<feature type="region of interest" description="Disordered" evidence="3">
    <location>
        <begin position="1"/>
        <end position="29"/>
    </location>
</feature>
<feature type="region of interest" description="Disordered" evidence="3">
    <location>
        <begin position="115"/>
        <end position="140"/>
    </location>
</feature>
<feature type="region of interest" description="Disordered" evidence="3">
    <location>
        <begin position="319"/>
        <end position="345"/>
    </location>
</feature>
<feature type="region of interest" description="Disordered" evidence="3">
    <location>
        <begin position="987"/>
        <end position="1018"/>
    </location>
</feature>
<feature type="region of interest" description="Disordered" evidence="3">
    <location>
        <begin position="1067"/>
        <end position="1094"/>
    </location>
</feature>
<feature type="coiled-coil region" evidence="2">
    <location>
        <begin position="190"/>
        <end position="827"/>
    </location>
</feature>
<feature type="coiled-coil region" evidence="2">
    <location>
        <begin position="879"/>
        <end position="959"/>
    </location>
</feature>
<feature type="compositionally biased region" description="Basic and acidic residues" evidence="3">
    <location>
        <begin position="7"/>
        <end position="17"/>
    </location>
</feature>
<feature type="compositionally biased region" description="Polar residues" evidence="3">
    <location>
        <begin position="328"/>
        <end position="342"/>
    </location>
</feature>
<feature type="compositionally biased region" description="Basic and acidic residues" evidence="3">
    <location>
        <begin position="987"/>
        <end position="999"/>
    </location>
</feature>
<feature type="compositionally biased region" description="Basic residues" evidence="3">
    <location>
        <begin position="1000"/>
        <end position="1009"/>
    </location>
</feature>
<feature type="modified residue" description="Phosphoserine" evidence="9">
    <location>
        <position position="31"/>
    </location>
</feature>
<feature type="modified residue" description="Phosphoserine" evidence="1">
    <location>
        <position position="249"/>
    </location>
</feature>
<feature type="modified residue" description="Phosphoserine" evidence="9">
    <location>
        <position position="291"/>
    </location>
</feature>
<feature type="modified residue" description="Phosphoserine" evidence="9 10">
    <location>
        <position position="331"/>
    </location>
</feature>
<feature type="modified residue" description="Phosphoserine" evidence="9">
    <location>
        <position position="1061"/>
    </location>
</feature>
<feature type="splice variant" id="VSP_030194" description="In isoform 3." evidence="7">
    <original>NLTRELENGEKQQLQMLDRLKEIQNHFDTCEA</original>
    <variation>HINRKCLLNLVQDLDCKDNEILTYSLQSPLHV</variation>
    <location>
        <begin position="404"/>
        <end position="435"/>
    </location>
</feature>
<feature type="splice variant" id="VSP_030195" description="In isoform 3." evidence="7">
    <location>
        <begin position="436"/>
        <end position="1094"/>
    </location>
</feature>
<feature type="splice variant" id="VSP_014752" description="In isoform 1." evidence="6">
    <original>D</original>
    <variation>R</variation>
    <location>
        <position position="987"/>
    </location>
</feature>
<feature type="splice variant" id="VSP_030196" description="In isoform 1." evidence="6">
    <location>
        <begin position="988"/>
        <end position="1094"/>
    </location>
</feature>
<feature type="sequence variant" id="VAR_037835" description="In dbSNP:rs7160694.">
    <original>R</original>
    <variation>L</variation>
    <location>
        <position position="16"/>
    </location>
</feature>
<feature type="sequence variant" id="VAR_037836" description="In dbSNP:rs327463.">
    <original>H</original>
    <variation>R</variation>
    <location>
        <position position="732"/>
    </location>
</feature>
<feature type="sequence conflict" description="In Ref. 2; AAH45834." evidence="8" ref="2">
    <original>K</original>
    <variation>R</variation>
    <location>
        <position position="395"/>
    </location>
</feature>
<feature type="sequence conflict" description="In Ref. 3; BAB71273." evidence="8" ref="3">
    <original>P</original>
    <variation>A</variation>
    <location>
        <position position="973"/>
    </location>
</feature>
<accession>Q6ZU80</accession>
<accession>B9EK52</accession>
<accession>Q86X97</accession>
<accession>Q96ML4</accession>
<gene>
    <name type="primary">CEP128</name>
    <name type="synonym">C14orf145</name>
    <name type="synonym">C14orf61</name>
</gene>
<sequence length="1094" mass="128015">MAESSSESDHFRCRDRLSPWAARSTHRGTRSLPTVEVTEKVNTITSTLQDTSRNLRQVDQMLGRYREYSNGQAGAIEHLKESLEQSIDQLRSQRLLRNSGGRSISVTSLSASDLDGGTGSELHHFPPTSPLKDYGDPQGIKRMRSRTGVRFVQETDDMTQLHGFHQSLRDLSSEQIRLGDDFNRELSRRSRSDAETKRALEELTEKLNEAQKQEVVSDRVERRLQELEREMRTERELVERRQDQLGLMSLQLQEALKKQEAKADEHEGAIKNKLRQTETEKNQLEQELELSRRLLNQSEGSRETLLHQVEELRTQLTKAEGDRKGLQHQVSQISKQQSNYQDEQGEDWRFRRGVEREKQDLEKQMSDLRVQLNFSAMASELEEVKRCMERKDKEKAHLASQVENLTRELENGEKQQLQMLDRLKEIQNHFDTCEAERKHADLQISELTRHAEDATKQAERYLSELQQSEALKEEAEKRREDLKLKAQESIRQWKLKHKKLERALEKQSETVDELTGKNNQILKEKDELKTQLYAALQQIENLRKELNDVLTKRALQEEELHSKEEKLRDIKSHQADLELEVKNSLDTIHRLESELKKQSKIQSQMKVEKAHLEEEIAELKKSQAQDKAKLLEMQESIKDLSAIRADLANKLAEEERAKKAVLKDLSDLTAQAKSRDEETATIITQLKLERDVHQRELKDLTSSLQSVKTKHEQNIQELMKHFKKEKSEAENHIRTLKAESLEEKNMAKIHRGQLEKLKSQCDRLTEELTQNENENKKLKLKYQCLKDQLEEREKHISIEEEHLRRMEEARLQLKDQLLCLETEQESILGVIGKEIDAACKTFSKDSVEKLKVFSSGPDIHYDPHRWLAESKTKLQWLCEELKERENREKNLRHQLMLCRQQLRNLTENKESELQCLFQQIERQEQLLDEIHREKRDLLEETQRKDEEMGSLQDRVIALETSTQVALDHLESVPEKLSLLEDFKDFRDSCSSSERTDGRYSKYRVRRNSLQHHQDDTKYRTKSFKGDRTFLEGSHTRGLDHSSSWQDHSRFLSSPRFSYVNSFTKRTVAPDSASNKEDATMNGTSSQPKKEEYGS</sequence>
<organism>
    <name type="scientific">Homo sapiens</name>
    <name type="common">Human</name>
    <dbReference type="NCBI Taxonomy" id="9606"/>
    <lineage>
        <taxon>Eukaryota</taxon>
        <taxon>Metazoa</taxon>
        <taxon>Chordata</taxon>
        <taxon>Craniata</taxon>
        <taxon>Vertebrata</taxon>
        <taxon>Euteleostomi</taxon>
        <taxon>Mammalia</taxon>
        <taxon>Eutheria</taxon>
        <taxon>Euarchontoglires</taxon>
        <taxon>Primates</taxon>
        <taxon>Haplorrhini</taxon>
        <taxon>Catarrhini</taxon>
        <taxon>Hominidae</taxon>
        <taxon>Homo</taxon>
    </lineage>
</organism>
<comment type="subcellular location">
    <subcellularLocation>
        <location evidence="4">Cytoplasm</location>
        <location evidence="4">Cytoskeleton</location>
        <location evidence="4">Microtubule organizing center</location>
        <location evidence="4">Centrosome</location>
    </subcellularLocation>
    <subcellularLocation>
        <location evidence="5">Cytoplasm</location>
        <location evidence="5">Cytoskeleton</location>
        <location evidence="5">Microtubule organizing center</location>
        <location evidence="5">Centrosome</location>
        <location evidence="5">Centriole</location>
    </subcellularLocation>
    <subcellularLocation>
        <location evidence="5">Cytoplasm</location>
        <location evidence="5">Cytoskeleton</location>
        <location evidence="5">Spindle pole</location>
    </subcellularLocation>
    <text>Associates with the mother centriole.</text>
</comment>
<comment type="alternative products">
    <event type="alternative splicing"/>
    <isoform>
        <id>Q6ZU80-2</id>
        <name>2</name>
        <sequence type="displayed"/>
    </isoform>
    <isoform>
        <id>Q6ZU80-1</id>
        <name>1</name>
        <sequence type="described" ref="VSP_014752 VSP_030196"/>
    </isoform>
    <isoform>
        <id>Q6ZU80-3</id>
        <name>3</name>
        <sequence type="described" ref="VSP_030194 VSP_030195"/>
    </isoform>
</comment>
<comment type="miscellaneous">
    <molecule>Isoform 1</molecule>
    <text evidence="8">May be produced at very low levels due to a premature stop codon in the mRNA, leading to nonsense-mediated mRNA decay.</text>
</comment>
<comment type="sequence caution" evidence="8">
    <conflict type="erroneous initiation">
        <sequence resource="EMBL-CDS" id="BAB71273"/>
    </conflict>
    <text>Truncated N-terminus.</text>
</comment>
<reference key="1">
    <citation type="journal article" date="2003" name="Nature">
        <title>The DNA sequence and analysis of human chromosome 14.</title>
        <authorList>
            <person name="Heilig R."/>
            <person name="Eckenberg R."/>
            <person name="Petit J.-L."/>
            <person name="Fonknechten N."/>
            <person name="Da Silva C."/>
            <person name="Cattolico L."/>
            <person name="Levy M."/>
            <person name="Barbe V."/>
            <person name="De Berardinis V."/>
            <person name="Ureta-Vidal A."/>
            <person name="Pelletier E."/>
            <person name="Vico V."/>
            <person name="Anthouard V."/>
            <person name="Rowen L."/>
            <person name="Madan A."/>
            <person name="Qin S."/>
            <person name="Sun H."/>
            <person name="Du H."/>
            <person name="Pepin K."/>
            <person name="Artiguenave F."/>
            <person name="Robert C."/>
            <person name="Cruaud C."/>
            <person name="Bruels T."/>
            <person name="Jaillon O."/>
            <person name="Friedlander L."/>
            <person name="Samson G."/>
            <person name="Brottier P."/>
            <person name="Cure S."/>
            <person name="Segurens B."/>
            <person name="Aniere F."/>
            <person name="Samain S."/>
            <person name="Crespeau H."/>
            <person name="Abbasi N."/>
            <person name="Aiach N."/>
            <person name="Boscus D."/>
            <person name="Dickhoff R."/>
            <person name="Dors M."/>
            <person name="Dubois I."/>
            <person name="Friedman C."/>
            <person name="Gouyvenoux M."/>
            <person name="James R."/>
            <person name="Madan A."/>
            <person name="Mairey-Estrada B."/>
            <person name="Mangenot S."/>
            <person name="Martins N."/>
            <person name="Menard M."/>
            <person name="Oztas S."/>
            <person name="Ratcliffe A."/>
            <person name="Shaffer T."/>
            <person name="Trask B."/>
            <person name="Vacherie B."/>
            <person name="Bellemere C."/>
            <person name="Belser C."/>
            <person name="Besnard-Gonnet M."/>
            <person name="Bartol-Mavel D."/>
            <person name="Boutard M."/>
            <person name="Briez-Silla S."/>
            <person name="Combette S."/>
            <person name="Dufosse-Laurent V."/>
            <person name="Ferron C."/>
            <person name="Lechaplais C."/>
            <person name="Louesse C."/>
            <person name="Muselet D."/>
            <person name="Magdelenat G."/>
            <person name="Pateau E."/>
            <person name="Petit E."/>
            <person name="Sirvain-Trukniewicz P."/>
            <person name="Trybou A."/>
            <person name="Vega-Czarny N."/>
            <person name="Bataille E."/>
            <person name="Bluet E."/>
            <person name="Bordelais I."/>
            <person name="Dubois M."/>
            <person name="Dumont C."/>
            <person name="Guerin T."/>
            <person name="Haffray S."/>
            <person name="Hammadi R."/>
            <person name="Muanga J."/>
            <person name="Pellouin V."/>
            <person name="Robert D."/>
            <person name="Wunderle E."/>
            <person name="Gauguet G."/>
            <person name="Roy A."/>
            <person name="Sainte-Marthe L."/>
            <person name="Verdier J."/>
            <person name="Verdier-Discala C."/>
            <person name="Hillier L.W."/>
            <person name="Fulton L."/>
            <person name="McPherson J."/>
            <person name="Matsuda F."/>
            <person name="Wilson R."/>
            <person name="Scarpelli C."/>
            <person name="Gyapay G."/>
            <person name="Wincker P."/>
            <person name="Saurin W."/>
            <person name="Quetier F."/>
            <person name="Waterston R."/>
            <person name="Hood L."/>
            <person name="Weissenbach J."/>
        </authorList>
    </citation>
    <scope>NUCLEOTIDE SEQUENCE [LARGE SCALE GENOMIC DNA]</scope>
</reference>
<reference key="2">
    <citation type="journal article" date="2004" name="Genome Res.">
        <title>The status, quality, and expansion of the NIH full-length cDNA project: the Mammalian Gene Collection (MGC).</title>
        <authorList>
            <consortium name="The MGC Project Team"/>
        </authorList>
    </citation>
    <scope>NUCLEOTIDE SEQUENCE [LARGE SCALE MRNA] (ISOFORM 3)</scope>
    <source>
        <tissue>Testis</tissue>
    </source>
</reference>
<reference key="3">
    <citation type="journal article" date="2004" name="Nat. Genet.">
        <title>Complete sequencing and characterization of 21,243 full-length human cDNAs.</title>
        <authorList>
            <person name="Ota T."/>
            <person name="Suzuki Y."/>
            <person name="Nishikawa T."/>
            <person name="Otsuki T."/>
            <person name="Sugiyama T."/>
            <person name="Irie R."/>
            <person name="Wakamatsu A."/>
            <person name="Hayashi K."/>
            <person name="Sato H."/>
            <person name="Nagai K."/>
            <person name="Kimura K."/>
            <person name="Makita H."/>
            <person name="Sekine M."/>
            <person name="Obayashi M."/>
            <person name="Nishi T."/>
            <person name="Shibahara T."/>
            <person name="Tanaka T."/>
            <person name="Ishii S."/>
            <person name="Yamamoto J."/>
            <person name="Saito K."/>
            <person name="Kawai Y."/>
            <person name="Isono Y."/>
            <person name="Nakamura Y."/>
            <person name="Nagahari K."/>
            <person name="Murakami K."/>
            <person name="Yasuda T."/>
            <person name="Iwayanagi T."/>
            <person name="Wagatsuma M."/>
            <person name="Shiratori A."/>
            <person name="Sudo H."/>
            <person name="Hosoiri T."/>
            <person name="Kaku Y."/>
            <person name="Kodaira H."/>
            <person name="Kondo H."/>
            <person name="Sugawara M."/>
            <person name="Takahashi M."/>
            <person name="Kanda K."/>
            <person name="Yokoi T."/>
            <person name="Furuya T."/>
            <person name="Kikkawa E."/>
            <person name="Omura Y."/>
            <person name="Abe K."/>
            <person name="Kamihara K."/>
            <person name="Katsuta N."/>
            <person name="Sato K."/>
            <person name="Tanikawa M."/>
            <person name="Yamazaki M."/>
            <person name="Ninomiya K."/>
            <person name="Ishibashi T."/>
            <person name="Yamashita H."/>
            <person name="Murakawa K."/>
            <person name="Fujimori K."/>
            <person name="Tanai H."/>
            <person name="Kimata M."/>
            <person name="Watanabe M."/>
            <person name="Hiraoka S."/>
            <person name="Chiba Y."/>
            <person name="Ishida S."/>
            <person name="Ono Y."/>
            <person name="Takiguchi S."/>
            <person name="Watanabe S."/>
            <person name="Yosida M."/>
            <person name="Hotuta T."/>
            <person name="Kusano J."/>
            <person name="Kanehori K."/>
            <person name="Takahashi-Fujii A."/>
            <person name="Hara H."/>
            <person name="Tanase T.-O."/>
            <person name="Nomura Y."/>
            <person name="Togiya S."/>
            <person name="Komai F."/>
            <person name="Hara R."/>
            <person name="Takeuchi K."/>
            <person name="Arita M."/>
            <person name="Imose N."/>
            <person name="Musashino K."/>
            <person name="Yuuki H."/>
            <person name="Oshima A."/>
            <person name="Sasaki N."/>
            <person name="Aotsuka S."/>
            <person name="Yoshikawa Y."/>
            <person name="Matsunawa H."/>
            <person name="Ichihara T."/>
            <person name="Shiohata N."/>
            <person name="Sano S."/>
            <person name="Moriya S."/>
            <person name="Momiyama H."/>
            <person name="Satoh N."/>
            <person name="Takami S."/>
            <person name="Terashima Y."/>
            <person name="Suzuki O."/>
            <person name="Nakagawa S."/>
            <person name="Senoh A."/>
            <person name="Mizoguchi H."/>
            <person name="Goto Y."/>
            <person name="Shimizu F."/>
            <person name="Wakebe H."/>
            <person name="Hishigaki H."/>
            <person name="Watanabe T."/>
            <person name="Sugiyama A."/>
            <person name="Takemoto M."/>
            <person name="Kawakami B."/>
            <person name="Yamazaki M."/>
            <person name="Watanabe K."/>
            <person name="Kumagai A."/>
            <person name="Itakura S."/>
            <person name="Fukuzumi Y."/>
            <person name="Fujimori Y."/>
            <person name="Komiyama M."/>
            <person name="Tashiro H."/>
            <person name="Tanigami A."/>
            <person name="Fujiwara T."/>
            <person name="Ono T."/>
            <person name="Yamada K."/>
            <person name="Fujii Y."/>
            <person name="Ozaki K."/>
            <person name="Hirao M."/>
            <person name="Ohmori Y."/>
            <person name="Kawabata A."/>
            <person name="Hikiji T."/>
            <person name="Kobatake N."/>
            <person name="Inagaki H."/>
            <person name="Ikema Y."/>
            <person name="Okamoto S."/>
            <person name="Okitani R."/>
            <person name="Kawakami T."/>
            <person name="Noguchi S."/>
            <person name="Itoh T."/>
            <person name="Shigeta K."/>
            <person name="Senba T."/>
            <person name="Matsumura K."/>
            <person name="Nakajima Y."/>
            <person name="Mizuno T."/>
            <person name="Morinaga M."/>
            <person name="Sasaki M."/>
            <person name="Togashi T."/>
            <person name="Oyama M."/>
            <person name="Hata H."/>
            <person name="Watanabe M."/>
            <person name="Komatsu T."/>
            <person name="Mizushima-Sugano J."/>
            <person name="Satoh T."/>
            <person name="Shirai Y."/>
            <person name="Takahashi Y."/>
            <person name="Nakagawa K."/>
            <person name="Okumura K."/>
            <person name="Nagase T."/>
            <person name="Nomura N."/>
            <person name="Kikuchi H."/>
            <person name="Masuho Y."/>
            <person name="Yamashita R."/>
            <person name="Nakai K."/>
            <person name="Yada T."/>
            <person name="Nakamura Y."/>
            <person name="Ohara O."/>
            <person name="Isogai T."/>
            <person name="Sugano S."/>
        </authorList>
    </citation>
    <scope>NUCLEOTIDE SEQUENCE [LARGE SCALE MRNA] OF 310-1094 (ISOFORM 2)</scope>
    <scope>NUCLEOTIDE SEQUENCE [LARGE SCALE MRNA] OF 715-1094 (ISOFORM 1)</scope>
    <source>
        <tissue>Placenta</tissue>
        <tissue>Testis</tissue>
    </source>
</reference>
<reference key="4">
    <citation type="journal article" date="2003" name="Nature">
        <title>Proteomic characterization of the human centrosome by protein correlation profiling.</title>
        <authorList>
            <person name="Andersen J.S."/>
            <person name="Wilkinson C.J."/>
            <person name="Mayor T."/>
            <person name="Mortensen P."/>
            <person name="Nigg E.A."/>
            <person name="Mann M."/>
        </authorList>
    </citation>
    <scope>IDENTIFICATION BY MASS SPECTROMETRY</scope>
    <scope>SUBCELLULAR LOCATION [LARGE SCALE ANALYSIS]</scope>
    <source>
        <tissue>Lymphoblast</tissue>
    </source>
</reference>
<reference key="5">
    <citation type="journal article" date="2011" name="EMBO J.">
        <title>Novel asymmetrically localizing components of human centrosomes identified by complementary proteomics methods.</title>
        <authorList>
            <person name="Jakobsen L."/>
            <person name="Vanselow K."/>
            <person name="Skogs M."/>
            <person name="Toyoda Y."/>
            <person name="Lundberg E."/>
            <person name="Poser I."/>
            <person name="Falkenby L.G."/>
            <person name="Bennetzen M."/>
            <person name="Westendorf J."/>
            <person name="Nigg E.A."/>
            <person name="Uhlen M."/>
            <person name="Hyman A.A."/>
            <person name="Andersen J.S."/>
        </authorList>
    </citation>
    <scope>IDENTIFICATION BY MASS SPECTROMETRY</scope>
    <scope>SUBCELLULAR LOCATION</scope>
</reference>
<reference key="6">
    <citation type="journal article" date="2013" name="J. Proteome Res.">
        <title>Toward a comprehensive characterization of a human cancer cell phosphoproteome.</title>
        <authorList>
            <person name="Zhou H."/>
            <person name="Di Palma S."/>
            <person name="Preisinger C."/>
            <person name="Peng M."/>
            <person name="Polat A.N."/>
            <person name="Heck A.J."/>
            <person name="Mohammed S."/>
        </authorList>
    </citation>
    <scope>PHOSPHORYLATION [LARGE SCALE ANALYSIS] AT SER-31; SER-291; SER-331 AND SER-1061</scope>
    <scope>IDENTIFICATION BY MASS SPECTROMETRY [LARGE SCALE ANALYSIS]</scope>
    <source>
        <tissue>Cervix carcinoma</tissue>
        <tissue>Erythroleukemia</tissue>
    </source>
</reference>
<reference key="7">
    <citation type="journal article" date="2014" name="J. Proteomics">
        <title>An enzyme assisted RP-RPLC approach for in-depth analysis of human liver phosphoproteome.</title>
        <authorList>
            <person name="Bian Y."/>
            <person name="Song C."/>
            <person name="Cheng K."/>
            <person name="Dong M."/>
            <person name="Wang F."/>
            <person name="Huang J."/>
            <person name="Sun D."/>
            <person name="Wang L."/>
            <person name="Ye M."/>
            <person name="Zou H."/>
        </authorList>
    </citation>
    <scope>PHOSPHORYLATION [LARGE SCALE ANALYSIS] AT SER-331</scope>
    <scope>IDENTIFICATION BY MASS SPECTROMETRY [LARGE SCALE ANALYSIS]</scope>
    <source>
        <tissue>Liver</tissue>
    </source>
</reference>
<dbReference type="EMBL" id="AC010072">
    <property type="status" value="NOT_ANNOTATED_CDS"/>
    <property type="molecule type" value="Genomic_DNA"/>
</dbReference>
<dbReference type="EMBL" id="AC022404">
    <property type="status" value="NOT_ANNOTATED_CDS"/>
    <property type="molecule type" value="Genomic_DNA"/>
</dbReference>
<dbReference type="EMBL" id="AC018513">
    <property type="status" value="NOT_ANNOTATED_CDS"/>
    <property type="molecule type" value="Genomic_DNA"/>
</dbReference>
<dbReference type="EMBL" id="BC045834">
    <property type="protein sequence ID" value="AAH45834.2"/>
    <property type="molecule type" value="mRNA"/>
</dbReference>
<dbReference type="EMBL" id="BC150610">
    <property type="protein sequence ID" value="AAI50611.1"/>
    <property type="molecule type" value="mRNA"/>
</dbReference>
<dbReference type="EMBL" id="AK056756">
    <property type="protein sequence ID" value="BAB71273.1"/>
    <property type="status" value="ALT_INIT"/>
    <property type="molecule type" value="mRNA"/>
</dbReference>
<dbReference type="EMBL" id="AK125925">
    <property type="status" value="NOT_ANNOTATED_CDS"/>
    <property type="molecule type" value="mRNA"/>
</dbReference>
<dbReference type="CCDS" id="CCDS32130.1">
    <molecule id="Q6ZU80-2"/>
</dbReference>
<dbReference type="RefSeq" id="NP_689659.2">
    <molecule id="Q6ZU80-2"/>
    <property type="nucleotide sequence ID" value="NM_152446.3"/>
</dbReference>
<dbReference type="RefSeq" id="XP_006720119.1">
    <property type="nucleotide sequence ID" value="XM_006720056.3"/>
</dbReference>
<dbReference type="RefSeq" id="XP_047286974.1">
    <molecule id="Q6ZU80-2"/>
    <property type="nucleotide sequence ID" value="XM_047431018.1"/>
</dbReference>
<dbReference type="RefSeq" id="XP_047286975.1">
    <molecule id="Q6ZU80-2"/>
    <property type="nucleotide sequence ID" value="XM_047431019.1"/>
</dbReference>
<dbReference type="RefSeq" id="XP_047286976.1">
    <molecule id="Q6ZU80-2"/>
    <property type="nucleotide sequence ID" value="XM_047431020.1"/>
</dbReference>
<dbReference type="RefSeq" id="XP_047286977.1">
    <molecule id="Q6ZU80-2"/>
    <property type="nucleotide sequence ID" value="XM_047431021.1"/>
</dbReference>
<dbReference type="RefSeq" id="XP_047286978.1">
    <molecule id="Q6ZU80-2"/>
    <property type="nucleotide sequence ID" value="XM_047431022.1"/>
</dbReference>
<dbReference type="SMR" id="Q6ZU80"/>
<dbReference type="BioGRID" id="126920">
    <property type="interactions" value="301"/>
</dbReference>
<dbReference type="CORUM" id="Q6ZU80"/>
<dbReference type="FunCoup" id="Q6ZU80">
    <property type="interactions" value="1010"/>
</dbReference>
<dbReference type="IntAct" id="Q6ZU80">
    <property type="interactions" value="281"/>
</dbReference>
<dbReference type="MINT" id="Q6ZU80"/>
<dbReference type="STRING" id="9606.ENSP00000451162"/>
<dbReference type="MoonDB" id="Q6ZU80">
    <property type="type" value="Predicted"/>
</dbReference>
<dbReference type="iPTMnet" id="Q6ZU80"/>
<dbReference type="PhosphoSitePlus" id="Q6ZU80"/>
<dbReference type="BioMuta" id="CEP128"/>
<dbReference type="DMDM" id="166214932"/>
<dbReference type="jPOST" id="Q6ZU80"/>
<dbReference type="MassIVE" id="Q6ZU80"/>
<dbReference type="PaxDb" id="9606-ENSP00000451162"/>
<dbReference type="PeptideAtlas" id="Q6ZU80"/>
<dbReference type="ProteomicsDB" id="68321">
    <molecule id="Q6ZU80-2"/>
</dbReference>
<dbReference type="ProteomicsDB" id="68322">
    <molecule id="Q6ZU80-1"/>
</dbReference>
<dbReference type="ProteomicsDB" id="68323">
    <molecule id="Q6ZU80-3"/>
</dbReference>
<dbReference type="Pumba" id="Q6ZU80"/>
<dbReference type="Antibodypedia" id="2">
    <property type="antibodies" value="88 antibodies from 14 providers"/>
</dbReference>
<dbReference type="DNASU" id="145508"/>
<dbReference type="Ensembl" id="ENST00000216517.10">
    <molecule id="Q6ZU80-3"/>
    <property type="protein sequence ID" value="ENSP00000216517.6"/>
    <property type="gene ID" value="ENSG00000100629.17"/>
</dbReference>
<dbReference type="Ensembl" id="ENST00000281129.7">
    <molecule id="Q6ZU80-2"/>
    <property type="protein sequence ID" value="ENSP00000281129.3"/>
    <property type="gene ID" value="ENSG00000100629.17"/>
</dbReference>
<dbReference type="Ensembl" id="ENST00000555265.6">
    <molecule id="Q6ZU80-2"/>
    <property type="protein sequence ID" value="ENSP00000451162.1"/>
    <property type="gene ID" value="ENSG00000100629.17"/>
</dbReference>
<dbReference type="GeneID" id="145508"/>
<dbReference type="KEGG" id="hsa:145508"/>
<dbReference type="MANE-Select" id="ENST00000555265.6">
    <property type="protein sequence ID" value="ENSP00000451162.1"/>
    <property type="RefSeq nucleotide sequence ID" value="NM_152446.5"/>
    <property type="RefSeq protein sequence ID" value="NP_689659.2"/>
</dbReference>
<dbReference type="UCSC" id="uc001xux.3">
    <molecule id="Q6ZU80-2"/>
    <property type="organism name" value="human"/>
</dbReference>
<dbReference type="AGR" id="HGNC:20359"/>
<dbReference type="CTD" id="145508"/>
<dbReference type="DisGeNET" id="145508"/>
<dbReference type="GeneCards" id="CEP128"/>
<dbReference type="HGNC" id="HGNC:20359">
    <property type="gene designation" value="CEP128"/>
</dbReference>
<dbReference type="HPA" id="ENSG00000100629">
    <property type="expression patterns" value="Tissue enhanced (lymphoid)"/>
</dbReference>
<dbReference type="MalaCards" id="CEP128"/>
<dbReference type="MIM" id="620667">
    <property type="type" value="gene"/>
</dbReference>
<dbReference type="neXtProt" id="NX_Q6ZU80"/>
<dbReference type="OpenTargets" id="ENSG00000100629"/>
<dbReference type="PharmGKB" id="PA142672283"/>
<dbReference type="VEuPathDB" id="HostDB:ENSG00000100629"/>
<dbReference type="eggNOG" id="ENOG502QRR8">
    <property type="taxonomic scope" value="Eukaryota"/>
</dbReference>
<dbReference type="GeneTree" id="ENSGT00390000007020"/>
<dbReference type="HOGENOM" id="CLU_010570_0_0_1"/>
<dbReference type="InParanoid" id="Q6ZU80"/>
<dbReference type="OMA" id="ITSTLQX"/>
<dbReference type="OrthoDB" id="10046318at2759"/>
<dbReference type="PAN-GO" id="Q6ZU80">
    <property type="GO annotations" value="2 GO annotations based on evolutionary models"/>
</dbReference>
<dbReference type="PhylomeDB" id="Q6ZU80"/>
<dbReference type="TreeFam" id="TF331714"/>
<dbReference type="PathwayCommons" id="Q6ZU80"/>
<dbReference type="SignaLink" id="Q6ZU80"/>
<dbReference type="BioGRID-ORCS" id="145508">
    <property type="hits" value="8 hits in 1153 CRISPR screens"/>
</dbReference>
<dbReference type="ChiTaRS" id="CEP128">
    <property type="organism name" value="human"/>
</dbReference>
<dbReference type="GenomeRNAi" id="145508"/>
<dbReference type="Pharos" id="Q6ZU80">
    <property type="development level" value="Tbio"/>
</dbReference>
<dbReference type="PRO" id="PR:Q6ZU80"/>
<dbReference type="Proteomes" id="UP000005640">
    <property type="component" value="Chromosome 14"/>
</dbReference>
<dbReference type="RNAct" id="Q6ZU80">
    <property type="molecule type" value="protein"/>
</dbReference>
<dbReference type="Bgee" id="ENSG00000100629">
    <property type="expression patterns" value="Expressed in bone marrow cell and 123 other cell types or tissues"/>
</dbReference>
<dbReference type="ExpressionAtlas" id="Q6ZU80">
    <property type="expression patterns" value="baseline and differential"/>
</dbReference>
<dbReference type="GO" id="GO:0120103">
    <property type="term" value="C:centriolar subdistal appendage"/>
    <property type="evidence" value="ECO:0000314"/>
    <property type="project" value="GO_Central"/>
</dbReference>
<dbReference type="GO" id="GO:0005814">
    <property type="term" value="C:centriole"/>
    <property type="evidence" value="ECO:0000314"/>
    <property type="project" value="UniProtKB"/>
</dbReference>
<dbReference type="GO" id="GO:0005813">
    <property type="term" value="C:centrosome"/>
    <property type="evidence" value="ECO:0000314"/>
    <property type="project" value="HPA"/>
</dbReference>
<dbReference type="GO" id="GO:0005794">
    <property type="term" value="C:Golgi apparatus"/>
    <property type="evidence" value="ECO:0000314"/>
    <property type="project" value="HPA"/>
</dbReference>
<dbReference type="GO" id="GO:0031965">
    <property type="term" value="C:nuclear membrane"/>
    <property type="evidence" value="ECO:0000314"/>
    <property type="project" value="HPA"/>
</dbReference>
<dbReference type="GO" id="GO:0000922">
    <property type="term" value="C:spindle pole"/>
    <property type="evidence" value="ECO:0000314"/>
    <property type="project" value="UniProtKB"/>
</dbReference>
<dbReference type="GO" id="GO:0008104">
    <property type="term" value="P:protein localization"/>
    <property type="evidence" value="ECO:0000315"/>
    <property type="project" value="GO_Central"/>
</dbReference>
<dbReference type="GO" id="GO:0010468">
    <property type="term" value="P:regulation of gene expression"/>
    <property type="evidence" value="ECO:0007669"/>
    <property type="project" value="Ensembl"/>
</dbReference>
<dbReference type="GO" id="GO:0120316">
    <property type="term" value="P:sperm flagellum assembly"/>
    <property type="evidence" value="ECO:0007669"/>
    <property type="project" value="Ensembl"/>
</dbReference>
<dbReference type="InterPro" id="IPR026652">
    <property type="entry name" value="CEP128"/>
</dbReference>
<dbReference type="PANTHER" id="PTHR46657">
    <property type="entry name" value="CENTROSOMAL PROTEIN OF 128 KDA"/>
    <property type="match status" value="1"/>
</dbReference>
<dbReference type="PANTHER" id="PTHR46657:SF1">
    <property type="entry name" value="CENTROSOMAL PROTEIN OF 128 KDA"/>
    <property type="match status" value="1"/>
</dbReference>